<organism>
    <name type="scientific">Neisseria meningitidis serogroup B (strain ATCC BAA-335 / MC58)</name>
    <dbReference type="NCBI Taxonomy" id="122586"/>
    <lineage>
        <taxon>Bacteria</taxon>
        <taxon>Pseudomonadati</taxon>
        <taxon>Pseudomonadota</taxon>
        <taxon>Betaproteobacteria</taxon>
        <taxon>Neisseriales</taxon>
        <taxon>Neisseriaceae</taxon>
        <taxon>Neisseria</taxon>
    </lineage>
</organism>
<name>TILS_NEIMB</name>
<accession>Q4W568</accession>
<reference key="1">
    <citation type="journal article" date="2000" name="Science">
        <title>Complete genome sequence of Neisseria meningitidis serogroup B strain MC58.</title>
        <authorList>
            <person name="Tettelin H."/>
            <person name="Saunders N.J."/>
            <person name="Heidelberg J.F."/>
            <person name="Jeffries A.C."/>
            <person name="Nelson K.E."/>
            <person name="Eisen J.A."/>
            <person name="Ketchum K.A."/>
            <person name="Hood D.W."/>
            <person name="Peden J.F."/>
            <person name="Dodson R.J."/>
            <person name="Nelson W.C."/>
            <person name="Gwinn M.L."/>
            <person name="DeBoy R.T."/>
            <person name="Peterson J.D."/>
            <person name="Hickey E.K."/>
            <person name="Haft D.H."/>
            <person name="Salzberg S.L."/>
            <person name="White O."/>
            <person name="Fleischmann R.D."/>
            <person name="Dougherty B.A."/>
            <person name="Mason T.M."/>
            <person name="Ciecko A."/>
            <person name="Parksey D.S."/>
            <person name="Blair E."/>
            <person name="Cittone H."/>
            <person name="Clark E.B."/>
            <person name="Cotton M.D."/>
            <person name="Utterback T.R."/>
            <person name="Khouri H.M."/>
            <person name="Qin H."/>
            <person name="Vamathevan J.J."/>
            <person name="Gill J."/>
            <person name="Scarlato V."/>
            <person name="Masignani V."/>
            <person name="Pizza M."/>
            <person name="Grandi G."/>
            <person name="Sun L."/>
            <person name="Smith H.O."/>
            <person name="Fraser C.M."/>
            <person name="Moxon E.R."/>
            <person name="Rappuoli R."/>
            <person name="Venter J.C."/>
        </authorList>
    </citation>
    <scope>NUCLEOTIDE SEQUENCE [LARGE SCALE GENOMIC DNA]</scope>
    <source>
        <strain>ATCC BAA-335 / MC58</strain>
    </source>
</reference>
<proteinExistence type="inferred from homology"/>
<comment type="function">
    <text evidence="1">Ligates lysine onto the cytidine present at position 34 of the AUA codon-specific tRNA(Ile) that contains the anticodon CAU, in an ATP-dependent manner. Cytidine is converted to lysidine, thus changing the amino acid specificity of the tRNA from methionine to isoleucine.</text>
</comment>
<comment type="catalytic activity">
    <reaction evidence="1">
        <text>cytidine(34) in tRNA(Ile2) + L-lysine + ATP = lysidine(34) in tRNA(Ile2) + AMP + diphosphate + H(+)</text>
        <dbReference type="Rhea" id="RHEA:43744"/>
        <dbReference type="Rhea" id="RHEA-COMP:10625"/>
        <dbReference type="Rhea" id="RHEA-COMP:10670"/>
        <dbReference type="ChEBI" id="CHEBI:15378"/>
        <dbReference type="ChEBI" id="CHEBI:30616"/>
        <dbReference type="ChEBI" id="CHEBI:32551"/>
        <dbReference type="ChEBI" id="CHEBI:33019"/>
        <dbReference type="ChEBI" id="CHEBI:82748"/>
        <dbReference type="ChEBI" id="CHEBI:83665"/>
        <dbReference type="ChEBI" id="CHEBI:456215"/>
        <dbReference type="EC" id="6.3.4.19"/>
    </reaction>
</comment>
<comment type="subcellular location">
    <subcellularLocation>
        <location evidence="1">Cytoplasm</location>
    </subcellularLocation>
</comment>
<comment type="domain">
    <text>The N-terminal region contains the highly conserved SGGXDS motif, predicted to be a P-loop motif involved in ATP binding.</text>
</comment>
<comment type="similarity">
    <text evidence="1">Belongs to the tRNA(Ile)-lysidine synthase family.</text>
</comment>
<sequence length="426" mass="47732">MKDCFPQGLNGKKTAVALSGGLDSVVLLHLLVRAGKKGGFIPDALHIHHGLSPRADDWADFCQNYCDMLGVGLETVKVCVEKNGLGIEAAARQKRYAAFAEKGFDVLALAHHRDDQIETFMLAVARGGGLRALAAMPAVRPFGEKGIIWRPLLPFSRQDIWDYAQKHGLPNIEDESNTDTAYLRNRFRHRILPELSAQIPHFGRHVLNNVRALQEDLALLDEVVVQDCRWVCGAGYFDTARWLTFSPRRKTHILRHFLKENGIPVPNQNALADIARVLTEAKTGRWNLQGFELHHYAGRLFVFRLEKTDKLRFLKDRQISGNLREILTGQGFVLKRHPFGLPEHLLEQDGILRTVAASDTLAMGGIHKDVKKILQGKRVLPVLRPIWPLVADSGNRPLALANCCADFQYSVSDGILPVHPDFPILF</sequence>
<gene>
    <name evidence="1" type="primary">tilS1</name>
    <name type="ordered locus">NMB1140</name>
</gene>
<gene>
    <name evidence="1" type="primary">tilS2</name>
    <name type="ordered locus">NMB1178</name>
</gene>
<dbReference type="EC" id="6.3.4.19" evidence="1"/>
<dbReference type="EMBL" id="AE002098">
    <property type="protein sequence ID" value="AAY52148.1"/>
    <property type="molecule type" value="Genomic_DNA"/>
</dbReference>
<dbReference type="EMBL" id="AE002098">
    <property type="protein sequence ID" value="AAY52164.1"/>
    <property type="molecule type" value="Genomic_DNA"/>
</dbReference>
<dbReference type="RefSeq" id="YP_338291.1">
    <property type="nucleotide sequence ID" value="NC_003112.2"/>
</dbReference>
<dbReference type="RefSeq" id="YP_338292.1">
    <property type="nucleotide sequence ID" value="NC_003112.2"/>
</dbReference>
<dbReference type="SMR" id="Q4W568"/>
<dbReference type="FunCoup" id="Q4W568">
    <property type="interactions" value="298"/>
</dbReference>
<dbReference type="STRING" id="122586.NMB1140"/>
<dbReference type="PaxDb" id="122586-NMB1140"/>
<dbReference type="KEGG" id="nme:NMB1140"/>
<dbReference type="KEGG" id="nme:NMB1178"/>
<dbReference type="PATRIC" id="fig|122586.8.peg.1443"/>
<dbReference type="HOGENOM" id="CLU_018869_2_0_4"/>
<dbReference type="InParanoid" id="Q4W568"/>
<dbReference type="OrthoDB" id="9807403at2"/>
<dbReference type="Proteomes" id="UP000000425">
    <property type="component" value="Chromosome"/>
</dbReference>
<dbReference type="GO" id="GO:0005737">
    <property type="term" value="C:cytoplasm"/>
    <property type="evidence" value="ECO:0007669"/>
    <property type="project" value="UniProtKB-SubCell"/>
</dbReference>
<dbReference type="GO" id="GO:0005524">
    <property type="term" value="F:ATP binding"/>
    <property type="evidence" value="ECO:0007669"/>
    <property type="project" value="UniProtKB-UniRule"/>
</dbReference>
<dbReference type="GO" id="GO:0032267">
    <property type="term" value="F:tRNA(Ile)-lysidine synthase activity"/>
    <property type="evidence" value="ECO:0007669"/>
    <property type="project" value="UniProtKB-EC"/>
</dbReference>
<dbReference type="GO" id="GO:0006400">
    <property type="term" value="P:tRNA modification"/>
    <property type="evidence" value="ECO:0007669"/>
    <property type="project" value="UniProtKB-UniRule"/>
</dbReference>
<dbReference type="CDD" id="cd01992">
    <property type="entry name" value="TilS_N"/>
    <property type="match status" value="1"/>
</dbReference>
<dbReference type="Gene3D" id="1.20.59.20">
    <property type="match status" value="1"/>
</dbReference>
<dbReference type="Gene3D" id="3.40.50.620">
    <property type="entry name" value="HUPs"/>
    <property type="match status" value="1"/>
</dbReference>
<dbReference type="HAMAP" id="MF_01161">
    <property type="entry name" value="tRNA_Ile_lys_synt"/>
    <property type="match status" value="1"/>
</dbReference>
<dbReference type="InterPro" id="IPR012796">
    <property type="entry name" value="Lysidine-tRNA-synth_C"/>
</dbReference>
<dbReference type="InterPro" id="IPR014729">
    <property type="entry name" value="Rossmann-like_a/b/a_fold"/>
</dbReference>
<dbReference type="InterPro" id="IPR011063">
    <property type="entry name" value="TilS/TtcA_N"/>
</dbReference>
<dbReference type="InterPro" id="IPR012094">
    <property type="entry name" value="tRNA_Ile_lys_synt"/>
</dbReference>
<dbReference type="InterPro" id="IPR012795">
    <property type="entry name" value="tRNA_Ile_lys_synt_N"/>
</dbReference>
<dbReference type="InterPro" id="IPR015262">
    <property type="entry name" value="tRNA_Ile_lys_synt_subst-bd"/>
</dbReference>
<dbReference type="NCBIfam" id="TIGR02433">
    <property type="entry name" value="lysidine_TilS_C"/>
    <property type="match status" value="1"/>
</dbReference>
<dbReference type="NCBIfam" id="TIGR02432">
    <property type="entry name" value="lysidine_TilS_N"/>
    <property type="match status" value="1"/>
</dbReference>
<dbReference type="PANTHER" id="PTHR43033">
    <property type="entry name" value="TRNA(ILE)-LYSIDINE SYNTHASE-RELATED"/>
    <property type="match status" value="1"/>
</dbReference>
<dbReference type="PANTHER" id="PTHR43033:SF1">
    <property type="entry name" value="TRNA(ILE)-LYSIDINE SYNTHASE-RELATED"/>
    <property type="match status" value="1"/>
</dbReference>
<dbReference type="Pfam" id="PF01171">
    <property type="entry name" value="ATP_bind_3"/>
    <property type="match status" value="1"/>
</dbReference>
<dbReference type="Pfam" id="PF09179">
    <property type="entry name" value="TilS"/>
    <property type="match status" value="1"/>
</dbReference>
<dbReference type="SMART" id="SM00977">
    <property type="entry name" value="TilS_C"/>
    <property type="match status" value="1"/>
</dbReference>
<dbReference type="SUPFAM" id="SSF52402">
    <property type="entry name" value="Adenine nucleotide alpha hydrolases-like"/>
    <property type="match status" value="1"/>
</dbReference>
<dbReference type="SUPFAM" id="SSF82829">
    <property type="entry name" value="MesJ substrate recognition domain-like"/>
    <property type="match status" value="1"/>
</dbReference>
<dbReference type="SUPFAM" id="SSF56037">
    <property type="entry name" value="PheT/TilS domain"/>
    <property type="match status" value="1"/>
</dbReference>
<feature type="chain" id="PRO_0000181734" description="tRNA(Ile)-lysidine synthase">
    <location>
        <begin position="1"/>
        <end position="426"/>
    </location>
</feature>
<feature type="binding site" evidence="1">
    <location>
        <begin position="19"/>
        <end position="24"/>
    </location>
    <ligand>
        <name>ATP</name>
        <dbReference type="ChEBI" id="CHEBI:30616"/>
    </ligand>
</feature>
<protein>
    <recommendedName>
        <fullName evidence="1">tRNA(Ile)-lysidine synthase</fullName>
        <ecNumber evidence="1">6.3.4.19</ecNumber>
    </recommendedName>
    <alternativeName>
        <fullName evidence="1">tRNA(Ile)-2-lysyl-cytidine synthase</fullName>
    </alternativeName>
    <alternativeName>
        <fullName evidence="1">tRNA(Ile)-lysidine synthetase</fullName>
    </alternativeName>
</protein>
<keyword id="KW-0067">ATP-binding</keyword>
<keyword id="KW-0963">Cytoplasm</keyword>
<keyword id="KW-0436">Ligase</keyword>
<keyword id="KW-0547">Nucleotide-binding</keyword>
<keyword id="KW-1185">Reference proteome</keyword>
<keyword id="KW-0819">tRNA processing</keyword>
<evidence type="ECO:0000255" key="1">
    <source>
        <dbReference type="HAMAP-Rule" id="MF_01161"/>
    </source>
</evidence>